<sequence length="209" mass="22825">MTKGILGRKVGMTQVFTENGELIPVTVIEAAQNVVLQKKTVETDGYEAVQIGFEDKRAILSNKPEQGHVAKANTTPKRFIREFRDVNLDEYEIGAEVKVDVFAEGDIIDATGVSKGKGFQGVIKRHGQSRGPMAHGSRYHRRPGSMGPVAPNRVFKNKLLPGRMGGEQITIQNLEIVKVDVEKNVLLVKGNVPGAKKALVQIKTATKAK</sequence>
<feature type="chain" id="PRO_0000077115" description="Large ribosomal subunit protein uL3">
    <location>
        <begin position="1"/>
        <end position="209"/>
    </location>
</feature>
<feature type="region of interest" description="Disordered" evidence="2">
    <location>
        <begin position="126"/>
        <end position="148"/>
    </location>
</feature>
<protein>
    <recommendedName>
        <fullName evidence="1">Large ribosomal subunit protein uL3</fullName>
    </recommendedName>
    <alternativeName>
        <fullName evidence="3">50S ribosomal protein L3</fullName>
    </alternativeName>
</protein>
<evidence type="ECO:0000255" key="1">
    <source>
        <dbReference type="HAMAP-Rule" id="MF_01325"/>
    </source>
</evidence>
<evidence type="ECO:0000256" key="2">
    <source>
        <dbReference type="SAM" id="MobiDB-lite"/>
    </source>
</evidence>
<evidence type="ECO:0000305" key="3"/>
<organism>
    <name type="scientific">Listeria monocytogenes serotype 4b (strain F2365)</name>
    <dbReference type="NCBI Taxonomy" id="265669"/>
    <lineage>
        <taxon>Bacteria</taxon>
        <taxon>Bacillati</taxon>
        <taxon>Bacillota</taxon>
        <taxon>Bacilli</taxon>
        <taxon>Bacillales</taxon>
        <taxon>Listeriaceae</taxon>
        <taxon>Listeria</taxon>
    </lineage>
</organism>
<comment type="function">
    <text evidence="1">One of the primary rRNA binding proteins, it binds directly near the 3'-end of the 23S rRNA, where it nucleates assembly of the 50S subunit.</text>
</comment>
<comment type="subunit">
    <text evidence="1">Part of the 50S ribosomal subunit. Forms a cluster with proteins L14 and L19.</text>
</comment>
<comment type="similarity">
    <text evidence="1">Belongs to the universal ribosomal protein uL3 family.</text>
</comment>
<reference key="1">
    <citation type="journal article" date="2004" name="Nucleic Acids Res.">
        <title>Whole genome comparisons of serotype 4b and 1/2a strains of the food-borne pathogen Listeria monocytogenes reveal new insights into the core genome components of this species.</title>
        <authorList>
            <person name="Nelson K.E."/>
            <person name="Fouts D.E."/>
            <person name="Mongodin E.F."/>
            <person name="Ravel J."/>
            <person name="DeBoy R.T."/>
            <person name="Kolonay J.F."/>
            <person name="Rasko D.A."/>
            <person name="Angiuoli S.V."/>
            <person name="Gill S.R."/>
            <person name="Paulsen I.T."/>
            <person name="Peterson J.D."/>
            <person name="White O."/>
            <person name="Nelson W.C."/>
            <person name="Nierman W.C."/>
            <person name="Beanan M.J."/>
            <person name="Brinkac L.M."/>
            <person name="Daugherty S.C."/>
            <person name="Dodson R.J."/>
            <person name="Durkin A.S."/>
            <person name="Madupu R."/>
            <person name="Haft D.H."/>
            <person name="Selengut J."/>
            <person name="Van Aken S.E."/>
            <person name="Khouri H.M."/>
            <person name="Fedorova N."/>
            <person name="Forberger H.A."/>
            <person name="Tran B."/>
            <person name="Kathariou S."/>
            <person name="Wonderling L.D."/>
            <person name="Uhlich G.A."/>
            <person name="Bayles D.O."/>
            <person name="Luchansky J.B."/>
            <person name="Fraser C.M."/>
        </authorList>
    </citation>
    <scope>NUCLEOTIDE SEQUENCE [LARGE SCALE GENOMIC DNA]</scope>
    <source>
        <strain>F2365</strain>
    </source>
</reference>
<accession>Q71WE6</accession>
<keyword id="KW-0687">Ribonucleoprotein</keyword>
<keyword id="KW-0689">Ribosomal protein</keyword>
<keyword id="KW-0694">RNA-binding</keyword>
<keyword id="KW-0699">rRNA-binding</keyword>
<gene>
    <name evidence="1" type="primary">rplC</name>
    <name type="ordered locus">LMOf2365_2605</name>
</gene>
<dbReference type="EMBL" id="AE017262">
    <property type="protein sequence ID" value="AAT05370.1"/>
    <property type="molecule type" value="Genomic_DNA"/>
</dbReference>
<dbReference type="RefSeq" id="WP_003726733.1">
    <property type="nucleotide sequence ID" value="NC_002973.6"/>
</dbReference>
<dbReference type="SMR" id="Q71WE6"/>
<dbReference type="GeneID" id="93240513"/>
<dbReference type="KEGG" id="lmf:LMOf2365_2605"/>
<dbReference type="HOGENOM" id="CLU_044142_4_1_9"/>
<dbReference type="GO" id="GO:0022625">
    <property type="term" value="C:cytosolic large ribosomal subunit"/>
    <property type="evidence" value="ECO:0007669"/>
    <property type="project" value="TreeGrafter"/>
</dbReference>
<dbReference type="GO" id="GO:0019843">
    <property type="term" value="F:rRNA binding"/>
    <property type="evidence" value="ECO:0007669"/>
    <property type="project" value="UniProtKB-UniRule"/>
</dbReference>
<dbReference type="GO" id="GO:0003735">
    <property type="term" value="F:structural constituent of ribosome"/>
    <property type="evidence" value="ECO:0007669"/>
    <property type="project" value="InterPro"/>
</dbReference>
<dbReference type="GO" id="GO:0006412">
    <property type="term" value="P:translation"/>
    <property type="evidence" value="ECO:0007669"/>
    <property type="project" value="UniProtKB-UniRule"/>
</dbReference>
<dbReference type="FunFam" id="2.40.30.10:FF:000004">
    <property type="entry name" value="50S ribosomal protein L3"/>
    <property type="match status" value="1"/>
</dbReference>
<dbReference type="FunFam" id="3.30.160.810:FF:000002">
    <property type="entry name" value="50S ribosomal protein L3"/>
    <property type="match status" value="1"/>
</dbReference>
<dbReference type="Gene3D" id="3.30.160.810">
    <property type="match status" value="1"/>
</dbReference>
<dbReference type="Gene3D" id="2.40.30.10">
    <property type="entry name" value="Translation factors"/>
    <property type="match status" value="1"/>
</dbReference>
<dbReference type="HAMAP" id="MF_01325_B">
    <property type="entry name" value="Ribosomal_uL3_B"/>
    <property type="match status" value="1"/>
</dbReference>
<dbReference type="InterPro" id="IPR000597">
    <property type="entry name" value="Ribosomal_uL3"/>
</dbReference>
<dbReference type="InterPro" id="IPR019927">
    <property type="entry name" value="Ribosomal_uL3_bac/org-type"/>
</dbReference>
<dbReference type="InterPro" id="IPR019926">
    <property type="entry name" value="Ribosomal_uL3_CS"/>
</dbReference>
<dbReference type="InterPro" id="IPR009000">
    <property type="entry name" value="Transl_B-barrel_sf"/>
</dbReference>
<dbReference type="NCBIfam" id="TIGR03625">
    <property type="entry name" value="L3_bact"/>
    <property type="match status" value="1"/>
</dbReference>
<dbReference type="PANTHER" id="PTHR11229">
    <property type="entry name" value="50S RIBOSOMAL PROTEIN L3"/>
    <property type="match status" value="1"/>
</dbReference>
<dbReference type="PANTHER" id="PTHR11229:SF16">
    <property type="entry name" value="LARGE RIBOSOMAL SUBUNIT PROTEIN UL3C"/>
    <property type="match status" value="1"/>
</dbReference>
<dbReference type="Pfam" id="PF00297">
    <property type="entry name" value="Ribosomal_L3"/>
    <property type="match status" value="1"/>
</dbReference>
<dbReference type="SUPFAM" id="SSF50447">
    <property type="entry name" value="Translation proteins"/>
    <property type="match status" value="1"/>
</dbReference>
<dbReference type="PROSITE" id="PS00474">
    <property type="entry name" value="RIBOSOMAL_L3"/>
    <property type="match status" value="1"/>
</dbReference>
<proteinExistence type="inferred from homology"/>
<name>RL3_LISMF</name>